<accession>B4SVF5</accession>
<reference key="1">
    <citation type="journal article" date="2011" name="J. Bacteriol.">
        <title>Comparative genomics of 28 Salmonella enterica isolates: evidence for CRISPR-mediated adaptive sublineage evolution.</title>
        <authorList>
            <person name="Fricke W.F."/>
            <person name="Mammel M.K."/>
            <person name="McDermott P.F."/>
            <person name="Tartera C."/>
            <person name="White D.G."/>
            <person name="Leclerc J.E."/>
            <person name="Ravel J."/>
            <person name="Cebula T.A."/>
        </authorList>
    </citation>
    <scope>NUCLEOTIDE SEQUENCE [LARGE SCALE GENOMIC DNA]</scope>
    <source>
        <strain>SL254</strain>
    </source>
</reference>
<name>CMOA_SALNS</name>
<protein>
    <recommendedName>
        <fullName evidence="1">Carboxy-S-adenosyl-L-methionine synthase</fullName>
        <shortName evidence="1">Cx-SAM synthase</shortName>
        <ecNumber evidence="1">2.1.3.-</ecNumber>
    </recommendedName>
</protein>
<organism>
    <name type="scientific">Salmonella newport (strain SL254)</name>
    <dbReference type="NCBI Taxonomy" id="423368"/>
    <lineage>
        <taxon>Bacteria</taxon>
        <taxon>Pseudomonadati</taxon>
        <taxon>Pseudomonadota</taxon>
        <taxon>Gammaproteobacteria</taxon>
        <taxon>Enterobacterales</taxon>
        <taxon>Enterobacteriaceae</taxon>
        <taxon>Salmonella</taxon>
    </lineage>
</organism>
<keyword id="KW-0949">S-adenosyl-L-methionine</keyword>
<keyword id="KW-0808">Transferase</keyword>
<proteinExistence type="inferred from homology"/>
<dbReference type="EC" id="2.1.3.-" evidence="1"/>
<dbReference type="EMBL" id="CP001113">
    <property type="protein sequence ID" value="ACF65665.1"/>
    <property type="molecule type" value="Genomic_DNA"/>
</dbReference>
<dbReference type="RefSeq" id="WP_000019607.1">
    <property type="nucleotide sequence ID" value="NZ_CCMR01000003.1"/>
</dbReference>
<dbReference type="SMR" id="B4SVF5"/>
<dbReference type="KEGG" id="see:SNSL254_A2064"/>
<dbReference type="HOGENOM" id="CLU_078475_0_0_6"/>
<dbReference type="Proteomes" id="UP000008824">
    <property type="component" value="Chromosome"/>
</dbReference>
<dbReference type="GO" id="GO:0016743">
    <property type="term" value="F:carboxyl- or carbamoyltransferase activity"/>
    <property type="evidence" value="ECO:0007669"/>
    <property type="project" value="UniProtKB-UniRule"/>
</dbReference>
<dbReference type="GO" id="GO:1904047">
    <property type="term" value="F:S-adenosyl-L-methionine binding"/>
    <property type="evidence" value="ECO:0007669"/>
    <property type="project" value="UniProtKB-UniRule"/>
</dbReference>
<dbReference type="GO" id="GO:0002098">
    <property type="term" value="P:tRNA wobble uridine modification"/>
    <property type="evidence" value="ECO:0007669"/>
    <property type="project" value="InterPro"/>
</dbReference>
<dbReference type="CDD" id="cd02440">
    <property type="entry name" value="AdoMet_MTases"/>
    <property type="match status" value="1"/>
</dbReference>
<dbReference type="FunFam" id="3.40.50.150:FF:000030">
    <property type="entry name" value="Carboxy-S-adenosyl-L-methionine synthase"/>
    <property type="match status" value="1"/>
</dbReference>
<dbReference type="Gene3D" id="3.40.50.150">
    <property type="entry name" value="Vaccinia Virus protein VP39"/>
    <property type="match status" value="1"/>
</dbReference>
<dbReference type="HAMAP" id="MF_01589">
    <property type="entry name" value="Cx_SAM_synthase"/>
    <property type="match status" value="1"/>
</dbReference>
<dbReference type="InterPro" id="IPR005271">
    <property type="entry name" value="CmoA"/>
</dbReference>
<dbReference type="InterPro" id="IPR041698">
    <property type="entry name" value="Methyltransf_25"/>
</dbReference>
<dbReference type="InterPro" id="IPR029063">
    <property type="entry name" value="SAM-dependent_MTases_sf"/>
</dbReference>
<dbReference type="NCBIfam" id="TIGR00740">
    <property type="entry name" value="carboxy-S-adenosyl-L-methionine synthase CmoA"/>
    <property type="match status" value="1"/>
</dbReference>
<dbReference type="NCBIfam" id="NF011995">
    <property type="entry name" value="PRK15451.1"/>
    <property type="match status" value="1"/>
</dbReference>
<dbReference type="PANTHER" id="PTHR43861:SF2">
    <property type="entry name" value="CARBOXY-S-ADENOSYL-L-METHIONINE SYNTHASE"/>
    <property type="match status" value="1"/>
</dbReference>
<dbReference type="PANTHER" id="PTHR43861">
    <property type="entry name" value="TRANS-ACONITATE 2-METHYLTRANSFERASE-RELATED"/>
    <property type="match status" value="1"/>
</dbReference>
<dbReference type="Pfam" id="PF13649">
    <property type="entry name" value="Methyltransf_25"/>
    <property type="match status" value="1"/>
</dbReference>
<dbReference type="PIRSF" id="PIRSF006325">
    <property type="entry name" value="MeTrfase_bac"/>
    <property type="match status" value="1"/>
</dbReference>
<dbReference type="SUPFAM" id="SSF53335">
    <property type="entry name" value="S-adenosyl-L-methionine-dependent methyltransferases"/>
    <property type="match status" value="1"/>
</dbReference>
<comment type="function">
    <text evidence="1">Catalyzes the conversion of S-adenosyl-L-methionine (SAM) to carboxy-S-adenosyl-L-methionine (Cx-SAM).</text>
</comment>
<comment type="catalytic activity">
    <reaction evidence="1">
        <text>prephenate + S-adenosyl-L-methionine = carboxy-S-adenosyl-L-methionine + 3-phenylpyruvate + H2O</text>
        <dbReference type="Rhea" id="RHEA:51692"/>
        <dbReference type="ChEBI" id="CHEBI:15377"/>
        <dbReference type="ChEBI" id="CHEBI:18005"/>
        <dbReference type="ChEBI" id="CHEBI:29934"/>
        <dbReference type="ChEBI" id="CHEBI:59789"/>
        <dbReference type="ChEBI" id="CHEBI:134278"/>
    </reaction>
</comment>
<comment type="subunit">
    <text evidence="1">Homodimer.</text>
</comment>
<comment type="similarity">
    <text evidence="1">Belongs to the class I-like SAM-binding methyltransferase superfamily. Cx-SAM synthase family.</text>
</comment>
<evidence type="ECO:0000255" key="1">
    <source>
        <dbReference type="HAMAP-Rule" id="MF_01589"/>
    </source>
</evidence>
<gene>
    <name evidence="1" type="primary">cmoA</name>
    <name type="ordered locus">SNSL254_A2064</name>
</gene>
<sequence length="247" mass="27848">MSHRDTLFSAPIARLGDWTFDERVAEVFPDMIQRSVPGYSNIISMIGMLAERFVQPNTQVYDLGCSLGAATLSVRRNIRHEHCRIIAVDNSPAMIERCRRHIDAYKAPTPVEVVEGDIRDITIENASMVVLNFTLQFLEPAERQALLDKIYLGLNPGGALVLSEKFSFEDAKVGELLFNMHHDFKRANGYSELEISQKRSMLENVMLTDSVETHKARLRKAGFEHSELWFQCFNFGSLVALKAGVAA</sequence>
<feature type="chain" id="PRO_1000201366" description="Carboxy-S-adenosyl-L-methionine synthase">
    <location>
        <begin position="1"/>
        <end position="247"/>
    </location>
</feature>
<feature type="binding site" evidence="1">
    <location>
        <position position="39"/>
    </location>
    <ligand>
        <name>S-adenosyl-L-methionine</name>
        <dbReference type="ChEBI" id="CHEBI:59789"/>
    </ligand>
</feature>
<feature type="binding site" evidence="1">
    <location>
        <begin position="64"/>
        <end position="66"/>
    </location>
    <ligand>
        <name>S-adenosyl-L-methionine</name>
        <dbReference type="ChEBI" id="CHEBI:59789"/>
    </ligand>
</feature>
<feature type="binding site" evidence="1">
    <location>
        <begin position="89"/>
        <end position="90"/>
    </location>
    <ligand>
        <name>S-adenosyl-L-methionine</name>
        <dbReference type="ChEBI" id="CHEBI:59789"/>
    </ligand>
</feature>
<feature type="binding site" evidence="1">
    <location>
        <begin position="117"/>
        <end position="118"/>
    </location>
    <ligand>
        <name>S-adenosyl-L-methionine</name>
        <dbReference type="ChEBI" id="CHEBI:59789"/>
    </ligand>
</feature>
<feature type="binding site" evidence="1">
    <location>
        <position position="132"/>
    </location>
    <ligand>
        <name>S-adenosyl-L-methionine</name>
        <dbReference type="ChEBI" id="CHEBI:59789"/>
    </ligand>
</feature>
<feature type="binding site" evidence="1">
    <location>
        <position position="199"/>
    </location>
    <ligand>
        <name>S-adenosyl-L-methionine</name>
        <dbReference type="ChEBI" id="CHEBI:59789"/>
    </ligand>
</feature>